<protein>
    <recommendedName>
        <fullName evidence="1">5'-nucleotidase SurE</fullName>
        <ecNumber evidence="1">3.1.3.5</ecNumber>
    </recommendedName>
    <alternativeName>
        <fullName evidence="1">Nucleoside 5'-monophosphate phosphohydrolase</fullName>
    </alternativeName>
</protein>
<gene>
    <name evidence="1" type="primary">surE</name>
    <name type="ordered locus">P9515_14321</name>
</gene>
<evidence type="ECO:0000255" key="1">
    <source>
        <dbReference type="HAMAP-Rule" id="MF_00060"/>
    </source>
</evidence>
<comment type="function">
    <text evidence="1">Nucleotidase that shows phosphatase activity on nucleoside 5'-monophosphates.</text>
</comment>
<comment type="catalytic activity">
    <reaction evidence="1">
        <text>a ribonucleoside 5'-phosphate + H2O = a ribonucleoside + phosphate</text>
        <dbReference type="Rhea" id="RHEA:12484"/>
        <dbReference type="ChEBI" id="CHEBI:15377"/>
        <dbReference type="ChEBI" id="CHEBI:18254"/>
        <dbReference type="ChEBI" id="CHEBI:43474"/>
        <dbReference type="ChEBI" id="CHEBI:58043"/>
        <dbReference type="EC" id="3.1.3.5"/>
    </reaction>
</comment>
<comment type="cofactor">
    <cofactor evidence="1">
        <name>a divalent metal cation</name>
        <dbReference type="ChEBI" id="CHEBI:60240"/>
    </cofactor>
    <text evidence="1">Binds 1 divalent metal cation per subunit.</text>
</comment>
<comment type="subcellular location">
    <subcellularLocation>
        <location evidence="1">Cytoplasm</location>
    </subcellularLocation>
</comment>
<comment type="similarity">
    <text evidence="1">Belongs to the SurE nucleotidase family.</text>
</comment>
<accession>A2BXX8</accession>
<dbReference type="EC" id="3.1.3.5" evidence="1"/>
<dbReference type="EMBL" id="CP000552">
    <property type="protein sequence ID" value="ABM72639.1"/>
    <property type="molecule type" value="Genomic_DNA"/>
</dbReference>
<dbReference type="RefSeq" id="WP_011820736.1">
    <property type="nucleotide sequence ID" value="NC_008817.1"/>
</dbReference>
<dbReference type="SMR" id="A2BXX8"/>
<dbReference type="STRING" id="167542.P9515_14321"/>
<dbReference type="GeneID" id="60201212"/>
<dbReference type="KEGG" id="pmc:P9515_14321"/>
<dbReference type="eggNOG" id="COG0496">
    <property type="taxonomic scope" value="Bacteria"/>
</dbReference>
<dbReference type="HOGENOM" id="CLU_045192_1_3_3"/>
<dbReference type="OrthoDB" id="9780815at2"/>
<dbReference type="Proteomes" id="UP000001589">
    <property type="component" value="Chromosome"/>
</dbReference>
<dbReference type="GO" id="GO:0005737">
    <property type="term" value="C:cytoplasm"/>
    <property type="evidence" value="ECO:0007669"/>
    <property type="project" value="UniProtKB-SubCell"/>
</dbReference>
<dbReference type="GO" id="GO:0008254">
    <property type="term" value="F:3'-nucleotidase activity"/>
    <property type="evidence" value="ECO:0007669"/>
    <property type="project" value="TreeGrafter"/>
</dbReference>
<dbReference type="GO" id="GO:0008253">
    <property type="term" value="F:5'-nucleotidase activity"/>
    <property type="evidence" value="ECO:0007669"/>
    <property type="project" value="UniProtKB-UniRule"/>
</dbReference>
<dbReference type="GO" id="GO:0004309">
    <property type="term" value="F:exopolyphosphatase activity"/>
    <property type="evidence" value="ECO:0007669"/>
    <property type="project" value="TreeGrafter"/>
</dbReference>
<dbReference type="GO" id="GO:0046872">
    <property type="term" value="F:metal ion binding"/>
    <property type="evidence" value="ECO:0007669"/>
    <property type="project" value="UniProtKB-UniRule"/>
</dbReference>
<dbReference type="GO" id="GO:0000166">
    <property type="term" value="F:nucleotide binding"/>
    <property type="evidence" value="ECO:0007669"/>
    <property type="project" value="UniProtKB-KW"/>
</dbReference>
<dbReference type="Gene3D" id="3.40.1210.10">
    <property type="entry name" value="Survival protein SurE-like phosphatase/nucleotidase"/>
    <property type="match status" value="1"/>
</dbReference>
<dbReference type="HAMAP" id="MF_00060">
    <property type="entry name" value="SurE"/>
    <property type="match status" value="1"/>
</dbReference>
<dbReference type="InterPro" id="IPR030048">
    <property type="entry name" value="SurE"/>
</dbReference>
<dbReference type="InterPro" id="IPR002828">
    <property type="entry name" value="SurE-like_Pase/nucleotidase"/>
</dbReference>
<dbReference type="InterPro" id="IPR036523">
    <property type="entry name" value="SurE-like_sf"/>
</dbReference>
<dbReference type="NCBIfam" id="NF001490">
    <property type="entry name" value="PRK00346.1-4"/>
    <property type="match status" value="1"/>
</dbReference>
<dbReference type="NCBIfam" id="NF001492">
    <property type="entry name" value="PRK00346.2-2"/>
    <property type="match status" value="1"/>
</dbReference>
<dbReference type="NCBIfam" id="TIGR00087">
    <property type="entry name" value="surE"/>
    <property type="match status" value="1"/>
</dbReference>
<dbReference type="PANTHER" id="PTHR30457">
    <property type="entry name" value="5'-NUCLEOTIDASE SURE"/>
    <property type="match status" value="1"/>
</dbReference>
<dbReference type="PANTHER" id="PTHR30457:SF12">
    <property type="entry name" value="5'_3'-NUCLEOTIDASE SURE"/>
    <property type="match status" value="1"/>
</dbReference>
<dbReference type="Pfam" id="PF01975">
    <property type="entry name" value="SurE"/>
    <property type="match status" value="1"/>
</dbReference>
<dbReference type="SUPFAM" id="SSF64167">
    <property type="entry name" value="SurE-like"/>
    <property type="match status" value="1"/>
</dbReference>
<sequence length="269" mass="29605">MESLNILISNDDGVFAEGIRALARSALKKGHKVTVVCPDQERSATGHGLTLQSPLRVERADELFEPGIKAWGCSGTPADCVKLALSELLDKKPDLILSGVNHGPNLGTDIFCSGTVAAAMEGTLENVPSMAISVASFKWKNFEFASEIAMNIAEQAIKDNWPNALLLNLNIPPCEKNKIKELSWTRLSIRKYKNQFSKREDPRGDDYYWLAGEAVLDLKSKGYGPKNWPSDVSQIEENKISLTPVETDLFWRGSLDVLPKINASFINAS</sequence>
<feature type="chain" id="PRO_1000007764" description="5'-nucleotidase SurE">
    <location>
        <begin position="1"/>
        <end position="269"/>
    </location>
</feature>
<feature type="binding site" evidence="1">
    <location>
        <position position="11"/>
    </location>
    <ligand>
        <name>a divalent metal cation</name>
        <dbReference type="ChEBI" id="CHEBI:60240"/>
    </ligand>
</feature>
<feature type="binding site" evidence="1">
    <location>
        <position position="12"/>
    </location>
    <ligand>
        <name>a divalent metal cation</name>
        <dbReference type="ChEBI" id="CHEBI:60240"/>
    </ligand>
</feature>
<feature type="binding site" evidence="1">
    <location>
        <position position="43"/>
    </location>
    <ligand>
        <name>a divalent metal cation</name>
        <dbReference type="ChEBI" id="CHEBI:60240"/>
    </ligand>
</feature>
<feature type="binding site" evidence="1">
    <location>
        <position position="101"/>
    </location>
    <ligand>
        <name>a divalent metal cation</name>
        <dbReference type="ChEBI" id="CHEBI:60240"/>
    </ligand>
</feature>
<name>SURE_PROM5</name>
<organism>
    <name type="scientific">Prochlorococcus marinus (strain MIT 9515)</name>
    <dbReference type="NCBI Taxonomy" id="167542"/>
    <lineage>
        <taxon>Bacteria</taxon>
        <taxon>Bacillati</taxon>
        <taxon>Cyanobacteriota</taxon>
        <taxon>Cyanophyceae</taxon>
        <taxon>Synechococcales</taxon>
        <taxon>Prochlorococcaceae</taxon>
        <taxon>Prochlorococcus</taxon>
    </lineage>
</organism>
<reference key="1">
    <citation type="journal article" date="2007" name="PLoS Genet.">
        <title>Patterns and implications of gene gain and loss in the evolution of Prochlorococcus.</title>
        <authorList>
            <person name="Kettler G.C."/>
            <person name="Martiny A.C."/>
            <person name="Huang K."/>
            <person name="Zucker J."/>
            <person name="Coleman M.L."/>
            <person name="Rodrigue S."/>
            <person name="Chen F."/>
            <person name="Lapidus A."/>
            <person name="Ferriera S."/>
            <person name="Johnson J."/>
            <person name="Steglich C."/>
            <person name="Church G.M."/>
            <person name="Richardson P."/>
            <person name="Chisholm S.W."/>
        </authorList>
    </citation>
    <scope>NUCLEOTIDE SEQUENCE [LARGE SCALE GENOMIC DNA]</scope>
    <source>
        <strain>MIT 9515</strain>
    </source>
</reference>
<keyword id="KW-0963">Cytoplasm</keyword>
<keyword id="KW-0378">Hydrolase</keyword>
<keyword id="KW-0479">Metal-binding</keyword>
<keyword id="KW-0547">Nucleotide-binding</keyword>
<proteinExistence type="inferred from homology"/>